<reference key="1">
    <citation type="journal article" date="2002" name="Nat. Genet.">
        <title>Genome sequence of the endocellular obligate symbiont of tsetse flies, Wigglesworthia glossinidia.</title>
        <authorList>
            <person name="Akman L."/>
            <person name="Yamashita A."/>
            <person name="Watanabe H."/>
            <person name="Oshima K."/>
            <person name="Shiba T."/>
            <person name="Hattori M."/>
            <person name="Aksoy S."/>
        </authorList>
    </citation>
    <scope>NUCLEOTIDE SEQUENCE [LARGE SCALE GENOMIC DNA]</scope>
</reference>
<proteinExistence type="inferred from homology"/>
<accession>Q8D2M4</accession>
<feature type="chain" id="PRO_0000100899" description="Phosphoribosylaminoimidazole-succinocarboxamide synthase">
    <location>
        <begin position="1"/>
        <end position="240"/>
    </location>
</feature>
<keyword id="KW-0067">ATP-binding</keyword>
<keyword id="KW-0436">Ligase</keyword>
<keyword id="KW-0547">Nucleotide-binding</keyword>
<keyword id="KW-0658">Purine biosynthesis</keyword>
<keyword id="KW-1185">Reference proteome</keyword>
<comment type="catalytic activity">
    <reaction evidence="1">
        <text>5-amino-1-(5-phospho-D-ribosyl)imidazole-4-carboxylate + L-aspartate + ATP = (2S)-2-[5-amino-1-(5-phospho-beta-D-ribosyl)imidazole-4-carboxamido]succinate + ADP + phosphate + 2 H(+)</text>
        <dbReference type="Rhea" id="RHEA:22628"/>
        <dbReference type="ChEBI" id="CHEBI:15378"/>
        <dbReference type="ChEBI" id="CHEBI:29991"/>
        <dbReference type="ChEBI" id="CHEBI:30616"/>
        <dbReference type="ChEBI" id="CHEBI:43474"/>
        <dbReference type="ChEBI" id="CHEBI:58443"/>
        <dbReference type="ChEBI" id="CHEBI:77657"/>
        <dbReference type="ChEBI" id="CHEBI:456216"/>
        <dbReference type="EC" id="6.3.2.6"/>
    </reaction>
</comment>
<comment type="pathway">
    <text evidence="1">Purine metabolism; IMP biosynthesis via de novo pathway; 5-amino-1-(5-phospho-D-ribosyl)imidazole-4-carboxamide from 5-amino-1-(5-phospho-D-ribosyl)imidazole-4-carboxylate: step 1/2.</text>
</comment>
<comment type="similarity">
    <text evidence="1">Belongs to the SAICAR synthetase family.</text>
</comment>
<comment type="sequence caution" evidence="2">
    <conflict type="erroneous initiation">
        <sequence resource="EMBL-CDS" id="BAC24476"/>
    </conflict>
</comment>
<protein>
    <recommendedName>
        <fullName evidence="1">Phosphoribosylaminoimidazole-succinocarboxamide synthase</fullName>
        <ecNumber evidence="1">6.3.2.6</ecNumber>
    </recommendedName>
    <alternativeName>
        <fullName evidence="1">SAICAR synthetase</fullName>
    </alternativeName>
</protein>
<dbReference type="EC" id="6.3.2.6" evidence="1"/>
<dbReference type="EMBL" id="BA000021">
    <property type="protein sequence ID" value="BAC24476.1"/>
    <property type="status" value="ALT_INIT"/>
    <property type="molecule type" value="Genomic_DNA"/>
</dbReference>
<dbReference type="SMR" id="Q8D2M4"/>
<dbReference type="STRING" id="36870.gene:10368829"/>
<dbReference type="KEGG" id="wbr:purC"/>
<dbReference type="eggNOG" id="COG0152">
    <property type="taxonomic scope" value="Bacteria"/>
</dbReference>
<dbReference type="HOGENOM" id="CLU_061495_2_1_6"/>
<dbReference type="UniPathway" id="UPA00074">
    <property type="reaction ID" value="UER00131"/>
</dbReference>
<dbReference type="Proteomes" id="UP000000562">
    <property type="component" value="Chromosome"/>
</dbReference>
<dbReference type="GO" id="GO:0005829">
    <property type="term" value="C:cytosol"/>
    <property type="evidence" value="ECO:0007669"/>
    <property type="project" value="TreeGrafter"/>
</dbReference>
<dbReference type="GO" id="GO:0005524">
    <property type="term" value="F:ATP binding"/>
    <property type="evidence" value="ECO:0007669"/>
    <property type="project" value="UniProtKB-KW"/>
</dbReference>
<dbReference type="GO" id="GO:0004639">
    <property type="term" value="F:phosphoribosylaminoimidazolesuccinocarboxamide synthase activity"/>
    <property type="evidence" value="ECO:0007669"/>
    <property type="project" value="UniProtKB-UniRule"/>
</dbReference>
<dbReference type="GO" id="GO:0006189">
    <property type="term" value="P:'de novo' IMP biosynthetic process"/>
    <property type="evidence" value="ECO:0007669"/>
    <property type="project" value="UniProtKB-UniRule"/>
</dbReference>
<dbReference type="GO" id="GO:0009236">
    <property type="term" value="P:cobalamin biosynthetic process"/>
    <property type="evidence" value="ECO:0007669"/>
    <property type="project" value="InterPro"/>
</dbReference>
<dbReference type="CDD" id="cd01415">
    <property type="entry name" value="SAICAR_synt_PurC"/>
    <property type="match status" value="1"/>
</dbReference>
<dbReference type="Gene3D" id="3.30.470.20">
    <property type="entry name" value="ATP-grasp fold, B domain"/>
    <property type="match status" value="1"/>
</dbReference>
<dbReference type="Gene3D" id="3.30.200.20">
    <property type="entry name" value="Phosphorylase Kinase, domain 1"/>
    <property type="match status" value="1"/>
</dbReference>
<dbReference type="HAMAP" id="MF_00137">
    <property type="entry name" value="SAICAR_synth"/>
    <property type="match status" value="1"/>
</dbReference>
<dbReference type="InterPro" id="IPR028923">
    <property type="entry name" value="SAICAR_synt/ADE2_N"/>
</dbReference>
<dbReference type="InterPro" id="IPR033934">
    <property type="entry name" value="SAICAR_synt_PurC"/>
</dbReference>
<dbReference type="InterPro" id="IPR050089">
    <property type="entry name" value="SAICAR_synthetase"/>
</dbReference>
<dbReference type="InterPro" id="IPR018236">
    <property type="entry name" value="SAICAR_synthetase_CS"/>
</dbReference>
<dbReference type="PANTHER" id="PTHR43599">
    <property type="entry name" value="MULTIFUNCTIONAL PROTEIN ADE2"/>
    <property type="match status" value="1"/>
</dbReference>
<dbReference type="PANTHER" id="PTHR43599:SF3">
    <property type="entry name" value="SI:DKEY-6E2.2"/>
    <property type="match status" value="1"/>
</dbReference>
<dbReference type="Pfam" id="PF01259">
    <property type="entry name" value="SAICAR_synt"/>
    <property type="match status" value="1"/>
</dbReference>
<dbReference type="SUPFAM" id="SSF56104">
    <property type="entry name" value="SAICAR synthase-like"/>
    <property type="match status" value="1"/>
</dbReference>
<dbReference type="PROSITE" id="PS01057">
    <property type="entry name" value="SAICAR_SYNTHETASE_1"/>
    <property type="match status" value="1"/>
</dbReference>
<dbReference type="PROSITE" id="PS01058">
    <property type="entry name" value="SAICAR_SYNTHETASE_2"/>
    <property type="match status" value="1"/>
</dbReference>
<evidence type="ECO:0000255" key="1">
    <source>
        <dbReference type="HAMAP-Rule" id="MF_00137"/>
    </source>
</evidence>
<evidence type="ECO:0000305" key="2"/>
<gene>
    <name evidence="1" type="primary">purC</name>
    <name type="ordered locus">WIGBR3300</name>
</gene>
<organism>
    <name type="scientific">Wigglesworthia glossinidia brevipalpis</name>
    <dbReference type="NCBI Taxonomy" id="36870"/>
    <lineage>
        <taxon>Bacteria</taxon>
        <taxon>Pseudomonadati</taxon>
        <taxon>Pseudomonadota</taxon>
        <taxon>Gammaproteobacteria</taxon>
        <taxon>Enterobacterales</taxon>
        <taxon>Erwiniaceae</taxon>
        <taxon>Wigglesworthia</taxon>
    </lineage>
</organism>
<sequence length="240" mass="28547">MKIKKKNKIYQGKSKIIYSTNNSDVLILKFKKDMSRLNGKYIKKFDNKDIINNKFNYYIMNKISSFNIKTHILSLLSDNQVIVKKLKMIPIEFVVRNYAYGSLLKRFLIKERSFINPPILEFFFKNDGLKDPMINEYHCISFNLISENHIKKIKKILYKINNILKDIFYKAELILVDFKLEFGLFNGDLFLGDEFSLDNSRVWDKNSFKKMDKDIFREQLNENVIESYKEVANRIGCLID</sequence>
<name>PUR7_WIGBR</name>